<sequence>MSQKNGIATLLQAEKEAHEIVSKARKYRQDKLKQAKTDAAKEIDSYKIQKDKELKEFEQKNAGGVGELEKKAEAGVQGELAEIKKIAEKKKDDVVKILIETVIKPSAEVHINAL</sequence>
<name>VATG_YEAST</name>
<reference key="1">
    <citation type="journal article" date="1995" name="J. Biol. Chem.">
        <title>The Saccharomyces cerevisiae VMA10 is an intron-containing gene encoding a novel 13-kDa subunit of vacuolar H(+)-ATPase.</title>
        <authorList>
            <person name="Supekova L."/>
            <person name="Supek F."/>
            <person name="Nelson N."/>
        </authorList>
    </citation>
    <scope>NUCLEOTIDE SEQUENCE [MRNA]</scope>
    <scope>PROTEIN SEQUENCE OF 5-15; 57-65 AND 71-84</scope>
    <scope>FUNCTION</scope>
    <scope>IDENTIFICATION IN THE V-ATPASE COMPLEX</scope>
    <scope>SUBCELLULAR LOCATION</scope>
    <source>
        <strain>ATCC 200060 / W303</strain>
    </source>
</reference>
<reference key="2">
    <citation type="journal article" date="1994" name="Science">
        <title>Complete nucleotide sequence of Saccharomyces cerevisiae chromosome VIII.</title>
        <authorList>
            <person name="Johnston M."/>
            <person name="Andrews S."/>
            <person name="Brinkman R."/>
            <person name="Cooper J."/>
            <person name="Ding H."/>
            <person name="Dover J."/>
            <person name="Du Z."/>
            <person name="Favello A."/>
            <person name="Fulton L."/>
            <person name="Gattung S."/>
            <person name="Geisel C."/>
            <person name="Kirsten J."/>
            <person name="Kucaba T."/>
            <person name="Hillier L.W."/>
            <person name="Jier M."/>
            <person name="Johnston L."/>
            <person name="Langston Y."/>
            <person name="Latreille P."/>
            <person name="Louis E.J."/>
            <person name="Macri C."/>
            <person name="Mardis E."/>
            <person name="Menezes S."/>
            <person name="Mouser L."/>
            <person name="Nhan M."/>
            <person name="Rifkin L."/>
            <person name="Riles L."/>
            <person name="St Peter H."/>
            <person name="Trevaskis E."/>
            <person name="Vaughan K."/>
            <person name="Vignati D."/>
            <person name="Wilcox L."/>
            <person name="Wohldman P."/>
            <person name="Waterston R."/>
            <person name="Wilson R."/>
            <person name="Vaudin M."/>
        </authorList>
    </citation>
    <scope>NUCLEOTIDE SEQUENCE [LARGE SCALE GENOMIC DNA]</scope>
    <source>
        <strain>ATCC 204508 / S288c</strain>
    </source>
</reference>
<reference key="3">
    <citation type="journal article" date="2014" name="G3 (Bethesda)">
        <title>The reference genome sequence of Saccharomyces cerevisiae: Then and now.</title>
        <authorList>
            <person name="Engel S.R."/>
            <person name="Dietrich F.S."/>
            <person name="Fisk D.G."/>
            <person name="Binkley G."/>
            <person name="Balakrishnan R."/>
            <person name="Costanzo M.C."/>
            <person name="Dwight S.S."/>
            <person name="Hitz B.C."/>
            <person name="Karra K."/>
            <person name="Nash R.S."/>
            <person name="Weng S."/>
            <person name="Wong E.D."/>
            <person name="Lloyd P."/>
            <person name="Skrzypek M.S."/>
            <person name="Miyasato S.R."/>
            <person name="Simison M."/>
            <person name="Cherry J.M."/>
        </authorList>
    </citation>
    <scope>GENOME REANNOTATION</scope>
    <source>
        <strain>ATCC 204508 / S288c</strain>
    </source>
</reference>
<reference key="4">
    <citation type="journal article" date="2003" name="Nature">
        <title>Global analysis of protein expression in yeast.</title>
        <authorList>
            <person name="Ghaemmaghami S."/>
            <person name="Huh W.-K."/>
            <person name="Bower K."/>
            <person name="Howson R.W."/>
            <person name="Belle A."/>
            <person name="Dephoure N."/>
            <person name="O'Shea E.K."/>
            <person name="Weissman J.S."/>
        </authorList>
    </citation>
    <scope>LEVEL OF PROTEIN EXPRESSION [LARGE SCALE ANALYSIS]</scope>
</reference>
<reference key="5">
    <citation type="journal article" date="2012" name="Proc. Natl. Acad. Sci. U.S.A.">
        <title>N-terminal acetylome analyses and functional insights of the N-terminal acetyltransferase NatB.</title>
        <authorList>
            <person name="Van Damme P."/>
            <person name="Lasa M."/>
            <person name="Polevoda B."/>
            <person name="Gazquez C."/>
            <person name="Elosegui-Artola A."/>
            <person name="Kim D.S."/>
            <person name="De Juan-Pardo E."/>
            <person name="Demeyer K."/>
            <person name="Hole K."/>
            <person name="Larrea E."/>
            <person name="Timmerman E."/>
            <person name="Prieto J."/>
            <person name="Arnesen T."/>
            <person name="Sherman F."/>
            <person name="Gevaert K."/>
            <person name="Aldabe R."/>
        </authorList>
    </citation>
    <scope>ACETYLATION [LARGE SCALE ANALYSIS] AT SER-2</scope>
    <scope>CLEAVAGE OF INITIATOR METHIONINE [LARGE SCALE ANALYSIS]</scope>
    <scope>IDENTIFICATION BY MASS SPECTROMETRY [LARGE SCALE ANALYSIS]</scope>
</reference>
<reference evidence="7 8 9" key="6">
    <citation type="journal article" date="2015" name="Nature">
        <title>Electron cryomicroscopy observation of rotational states in a eukaryotic V-ATPase.</title>
        <authorList>
            <person name="Zhao J."/>
            <person name="Benlekbir S."/>
            <person name="Rubinstein J.L."/>
        </authorList>
    </citation>
    <scope>STRUCTURE BY ELECTRON MICROSCOPY (6.90 ANGSTROMS)</scope>
    <scope>IDENTIFICATION IN THE V-ATPASE COMPLEX</scope>
</reference>
<reference evidence="10 11" key="7">
    <citation type="journal article" date="2016" name="EMBO J.">
        <title>Crystal structure of yeast V1-ATPase in the autoinhibited state.</title>
        <authorList>
            <person name="Oot R.A."/>
            <person name="Kane P.M."/>
            <person name="Berry E.A."/>
            <person name="Wilkens S."/>
        </authorList>
    </citation>
    <scope>X-RAY CRYSTALLOGRAPHY (6.20 ANGSTROMS) OF 2-114</scope>
    <scope>IDENTIFICATION IN THE V-ATPASE COMPLEX</scope>
</reference>
<keyword id="KW-0002">3D-structure</keyword>
<keyword id="KW-0007">Acetylation</keyword>
<keyword id="KW-0903">Direct protein sequencing</keyword>
<keyword id="KW-0375">Hydrogen ion transport</keyword>
<keyword id="KW-0406">Ion transport</keyword>
<keyword id="KW-0472">Membrane</keyword>
<keyword id="KW-1185">Reference proteome</keyword>
<keyword id="KW-0813">Transport</keyword>
<keyword id="KW-0926">Vacuole</keyword>
<gene>
    <name evidence="5" type="primary">VMA10</name>
    <name type="ordered locus">YHR039C-A</name>
    <name type="ORF">YHR039BC</name>
    <name type="ORF">YHR039C-B</name>
</gene>
<protein>
    <recommendedName>
        <fullName>V-type proton ATPase subunit G</fullName>
        <shortName>V-ATPase subunit G</shortName>
    </recommendedName>
    <alternativeName>
        <fullName>V-ATPase 13 kDa subunit</fullName>
    </alternativeName>
    <alternativeName>
        <fullName>Vacuolar proton pump subunit G</fullName>
    </alternativeName>
</protein>
<accession>P48836</accession>
<accession>D3DKY7</accession>
<evidence type="ECO:0000269" key="1">
    <source>
    </source>
</evidence>
<evidence type="ECO:0000269" key="2">
    <source>
    </source>
</evidence>
<evidence type="ECO:0000269" key="3">
    <source>
    </source>
</evidence>
<evidence type="ECO:0000269" key="4">
    <source>
    </source>
</evidence>
<evidence type="ECO:0000303" key="5">
    <source>
    </source>
</evidence>
<evidence type="ECO:0000305" key="6"/>
<evidence type="ECO:0007744" key="7">
    <source>
        <dbReference type="PDB" id="3J9T"/>
    </source>
</evidence>
<evidence type="ECO:0007744" key="8">
    <source>
        <dbReference type="PDB" id="3J9U"/>
    </source>
</evidence>
<evidence type="ECO:0007744" key="9">
    <source>
        <dbReference type="PDB" id="3J9V"/>
    </source>
</evidence>
<evidence type="ECO:0007744" key="10">
    <source>
        <dbReference type="PDB" id="5BW9"/>
    </source>
</evidence>
<evidence type="ECO:0007744" key="11">
    <source>
        <dbReference type="PDB" id="5D80"/>
    </source>
</evidence>
<evidence type="ECO:0007744" key="12">
    <source>
    </source>
</evidence>
<evidence type="ECO:0007829" key="13">
    <source>
        <dbReference type="PDB" id="4DL0"/>
    </source>
</evidence>
<evidence type="ECO:0007829" key="14">
    <source>
        <dbReference type="PDB" id="4EFA"/>
    </source>
</evidence>
<evidence type="ECO:0007829" key="15">
    <source>
        <dbReference type="PDB" id="7TMO"/>
    </source>
</evidence>
<evidence type="ECO:0007829" key="16">
    <source>
        <dbReference type="PDB" id="7TMP"/>
    </source>
</evidence>
<dbReference type="EMBL" id="U21240">
    <property type="protein sequence ID" value="AAA74570.1"/>
    <property type="molecule type" value="mRNA"/>
</dbReference>
<dbReference type="EMBL" id="U00062">
    <property type="protein sequence ID" value="AAB68921.1"/>
    <property type="molecule type" value="Genomic_DNA"/>
</dbReference>
<dbReference type="EMBL" id="BK006934">
    <property type="protein sequence ID" value="DAA06731.1"/>
    <property type="molecule type" value="Genomic_DNA"/>
</dbReference>
<dbReference type="PIR" id="S70777">
    <property type="entry name" value="S70777"/>
</dbReference>
<dbReference type="RefSeq" id="NP_011905.1">
    <property type="nucleotide sequence ID" value="NM_001180027.1"/>
</dbReference>
<dbReference type="PDB" id="2K88">
    <property type="method" value="NMR"/>
    <property type="chains" value="A=2-58"/>
</dbReference>
<dbReference type="PDB" id="2KWY">
    <property type="method" value="NMR"/>
    <property type="chains" value="A=61-101"/>
</dbReference>
<dbReference type="PDB" id="3J9T">
    <property type="method" value="EM"/>
    <property type="resolution" value="6.90 A"/>
    <property type="chains" value="H/J/L=1-114"/>
</dbReference>
<dbReference type="PDB" id="3J9U">
    <property type="method" value="EM"/>
    <property type="resolution" value="7.60 A"/>
    <property type="chains" value="H/J/L=1-114"/>
</dbReference>
<dbReference type="PDB" id="3J9V">
    <property type="method" value="EM"/>
    <property type="resolution" value="8.30 A"/>
    <property type="chains" value="H/J/L=1-114"/>
</dbReference>
<dbReference type="PDB" id="4DL0">
    <property type="method" value="X-ray"/>
    <property type="resolution" value="2.90 A"/>
    <property type="chains" value="G/K=1-114"/>
</dbReference>
<dbReference type="PDB" id="4EFA">
    <property type="method" value="X-ray"/>
    <property type="resolution" value="2.82 A"/>
    <property type="chains" value="G=1-114"/>
</dbReference>
<dbReference type="PDB" id="5BW9">
    <property type="method" value="X-ray"/>
    <property type="resolution" value="7.00 A"/>
    <property type="chains" value="J/L/N/j/l/n=2-114"/>
</dbReference>
<dbReference type="PDB" id="5D80">
    <property type="method" value="X-ray"/>
    <property type="resolution" value="6.20 A"/>
    <property type="chains" value="J/L/N/j/l/n=2-114"/>
</dbReference>
<dbReference type="PDB" id="5VOX">
    <property type="method" value="EM"/>
    <property type="resolution" value="6.80 A"/>
    <property type="chains" value="H/J/L=1-114"/>
</dbReference>
<dbReference type="PDB" id="5VOY">
    <property type="method" value="EM"/>
    <property type="resolution" value="7.90 A"/>
    <property type="chains" value="H/J/L=1-114"/>
</dbReference>
<dbReference type="PDB" id="5VOZ">
    <property type="method" value="EM"/>
    <property type="resolution" value="7.60 A"/>
    <property type="chains" value="H/J/L=1-114"/>
</dbReference>
<dbReference type="PDB" id="6O7V">
    <property type="method" value="EM"/>
    <property type="resolution" value="6.60 A"/>
    <property type="chains" value="H/J/L=1-114"/>
</dbReference>
<dbReference type="PDB" id="6O7W">
    <property type="method" value="EM"/>
    <property type="resolution" value="7.00 A"/>
    <property type="chains" value="H/J/L=1-114"/>
</dbReference>
<dbReference type="PDB" id="6O7X">
    <property type="method" value="EM"/>
    <property type="resolution" value="8.70 A"/>
    <property type="chains" value="H/J/L=1-114"/>
</dbReference>
<dbReference type="PDB" id="7FDA">
    <property type="method" value="EM"/>
    <property type="resolution" value="4.20 A"/>
    <property type="chains" value="H/J/L=2-114"/>
</dbReference>
<dbReference type="PDB" id="7FDB">
    <property type="method" value="EM"/>
    <property type="resolution" value="4.80 A"/>
    <property type="chains" value="H/J/L=2-114"/>
</dbReference>
<dbReference type="PDB" id="7FDC">
    <property type="method" value="EM"/>
    <property type="resolution" value="6.60 A"/>
    <property type="chains" value="H/J/L=2-114"/>
</dbReference>
<dbReference type="PDB" id="7FDE">
    <property type="method" value="EM"/>
    <property type="resolution" value="3.80 A"/>
    <property type="chains" value="H/J/L=2-114"/>
</dbReference>
<dbReference type="PDB" id="7TMM">
    <property type="method" value="EM"/>
    <property type="resolution" value="3.50 A"/>
    <property type="chains" value="H/J/L=1-114"/>
</dbReference>
<dbReference type="PDB" id="7TMO">
    <property type="method" value="EM"/>
    <property type="resolution" value="3.30 A"/>
    <property type="chains" value="H/J/L=1-114"/>
</dbReference>
<dbReference type="PDB" id="7TMP">
    <property type="method" value="EM"/>
    <property type="resolution" value="3.30 A"/>
    <property type="chains" value="H/J/L=1-114"/>
</dbReference>
<dbReference type="PDB" id="7TMQ">
    <property type="method" value="EM"/>
    <property type="resolution" value="3.30 A"/>
    <property type="chains" value="H/J/L=1-114"/>
</dbReference>
<dbReference type="PDB" id="7TMR">
    <property type="method" value="EM"/>
    <property type="resolution" value="3.50 A"/>
    <property type="chains" value="H/J/L=1-114"/>
</dbReference>
<dbReference type="PDB" id="7TMS">
    <property type="method" value="EM"/>
    <property type="resolution" value="3.80 A"/>
    <property type="chains" value="H/J/L=1-114"/>
</dbReference>
<dbReference type="PDB" id="7TMT">
    <property type="method" value="EM"/>
    <property type="resolution" value="3.80 A"/>
    <property type="chains" value="H/J/L=1-114"/>
</dbReference>
<dbReference type="PDB" id="9COP">
    <property type="method" value="EM"/>
    <property type="resolution" value="2.70 A"/>
    <property type="chains" value="J/L=1-114"/>
</dbReference>
<dbReference type="PDBsum" id="2K88"/>
<dbReference type="PDBsum" id="2KWY"/>
<dbReference type="PDBsum" id="3J9T"/>
<dbReference type="PDBsum" id="3J9U"/>
<dbReference type="PDBsum" id="3J9V"/>
<dbReference type="PDBsum" id="4DL0"/>
<dbReference type="PDBsum" id="4EFA"/>
<dbReference type="PDBsum" id="5BW9"/>
<dbReference type="PDBsum" id="5D80"/>
<dbReference type="PDBsum" id="5VOX"/>
<dbReference type="PDBsum" id="5VOY"/>
<dbReference type="PDBsum" id="5VOZ"/>
<dbReference type="PDBsum" id="6O7V"/>
<dbReference type="PDBsum" id="6O7W"/>
<dbReference type="PDBsum" id="6O7X"/>
<dbReference type="PDBsum" id="7FDA"/>
<dbReference type="PDBsum" id="7FDB"/>
<dbReference type="PDBsum" id="7FDC"/>
<dbReference type="PDBsum" id="7FDE"/>
<dbReference type="PDBsum" id="7TMM"/>
<dbReference type="PDBsum" id="7TMO"/>
<dbReference type="PDBsum" id="7TMP"/>
<dbReference type="PDBsum" id="7TMQ"/>
<dbReference type="PDBsum" id="7TMR"/>
<dbReference type="PDBsum" id="7TMS"/>
<dbReference type="PDBsum" id="7TMT"/>
<dbReference type="PDBsum" id="9COP"/>
<dbReference type="BMRB" id="P48836"/>
<dbReference type="EMDB" id="EMD-0646"/>
<dbReference type="EMDB" id="EMD-0647"/>
<dbReference type="EMDB" id="EMD-0648"/>
<dbReference type="EMDB" id="EMD-26000"/>
<dbReference type="EMDB" id="EMD-26001"/>
<dbReference type="EMDB" id="EMD-26002"/>
<dbReference type="EMDB" id="EMD-31538"/>
<dbReference type="EMDB" id="EMD-31539"/>
<dbReference type="EMDB" id="EMD-31540"/>
<dbReference type="EMDB" id="EMD-31541"/>
<dbReference type="EMDB" id="EMD-45788"/>
<dbReference type="EMDB" id="EMD-8724"/>
<dbReference type="EMDB" id="EMD-8725"/>
<dbReference type="EMDB" id="EMD-8726"/>
<dbReference type="SMR" id="P48836"/>
<dbReference type="BioGRID" id="36471">
    <property type="interactions" value="421"/>
</dbReference>
<dbReference type="ComplexPortal" id="CPX-1192">
    <property type="entry name" value="Vacuolar proton translocating ATPase complex, Golgi variant"/>
</dbReference>
<dbReference type="ComplexPortal" id="CPX-1193">
    <property type="entry name" value="Vacuolar proton translocating ATPase complex, vacuole variant"/>
</dbReference>
<dbReference type="DIP" id="DIP-2720N"/>
<dbReference type="FunCoup" id="P48836">
    <property type="interactions" value="390"/>
</dbReference>
<dbReference type="IntAct" id="P48836">
    <property type="interactions" value="50"/>
</dbReference>
<dbReference type="MINT" id="P48836"/>
<dbReference type="STRING" id="4932.YHR039C-A"/>
<dbReference type="TCDB" id="3.A.2.2.3">
    <property type="family name" value="the h+- or na+-translocating f-type, v-type and a-type atpase (f-atpase) superfamily"/>
</dbReference>
<dbReference type="iPTMnet" id="P48836"/>
<dbReference type="PaxDb" id="4932-YHR039C-A"/>
<dbReference type="PeptideAtlas" id="P48836"/>
<dbReference type="TopDownProteomics" id="P48836"/>
<dbReference type="EnsemblFungi" id="YHR039C-A_mRNA">
    <property type="protein sequence ID" value="YHR039C-A"/>
    <property type="gene ID" value="YHR039C-A"/>
</dbReference>
<dbReference type="GeneID" id="856435"/>
<dbReference type="KEGG" id="sce:YHR039C-A"/>
<dbReference type="AGR" id="SGD:S000002100"/>
<dbReference type="SGD" id="S000002100">
    <property type="gene designation" value="VMA10"/>
</dbReference>
<dbReference type="VEuPathDB" id="FungiDB:YHR039C-A"/>
<dbReference type="eggNOG" id="KOG1772">
    <property type="taxonomic scope" value="Eukaryota"/>
</dbReference>
<dbReference type="HOGENOM" id="CLU_125101_2_1_1"/>
<dbReference type="InParanoid" id="P48836"/>
<dbReference type="OMA" id="ARKYRQD"/>
<dbReference type="OrthoDB" id="250802at2759"/>
<dbReference type="BioCyc" id="YEAST:G3O-31242-MONOMER"/>
<dbReference type="Reactome" id="R-SCE-1222556">
    <property type="pathway name" value="ROS and RNS production in phagocytes"/>
</dbReference>
<dbReference type="Reactome" id="R-SCE-77387">
    <property type="pathway name" value="Insulin receptor recycling"/>
</dbReference>
<dbReference type="Reactome" id="R-SCE-917977">
    <property type="pathway name" value="Transferrin endocytosis and recycling"/>
</dbReference>
<dbReference type="Reactome" id="R-SCE-9639288">
    <property type="pathway name" value="Amino acids regulate mTORC1"/>
</dbReference>
<dbReference type="BioGRID-ORCS" id="856435">
    <property type="hits" value="0 hits in 10 CRISPR screens"/>
</dbReference>
<dbReference type="EvolutionaryTrace" id="P48836"/>
<dbReference type="PRO" id="PR:P48836"/>
<dbReference type="Proteomes" id="UP000002311">
    <property type="component" value="Chromosome VIII"/>
</dbReference>
<dbReference type="RNAct" id="P48836">
    <property type="molecule type" value="protein"/>
</dbReference>
<dbReference type="GO" id="GO:0000329">
    <property type="term" value="C:fungal-type vacuole membrane"/>
    <property type="evidence" value="ECO:0007005"/>
    <property type="project" value="SGD"/>
</dbReference>
<dbReference type="GO" id="GO:0000139">
    <property type="term" value="C:Golgi membrane"/>
    <property type="evidence" value="ECO:0000303"/>
    <property type="project" value="ComplexPortal"/>
</dbReference>
<dbReference type="GO" id="GO:0033176">
    <property type="term" value="C:proton-transporting V-type ATPase complex"/>
    <property type="evidence" value="ECO:0000353"/>
    <property type="project" value="ComplexPortal"/>
</dbReference>
<dbReference type="GO" id="GO:0016471">
    <property type="term" value="C:vacuolar proton-transporting V-type ATPase complex"/>
    <property type="evidence" value="ECO:0000353"/>
    <property type="project" value="ComplexPortal"/>
</dbReference>
<dbReference type="GO" id="GO:0000221">
    <property type="term" value="C:vacuolar proton-transporting V-type ATPase, V1 domain"/>
    <property type="evidence" value="ECO:0000314"/>
    <property type="project" value="UniProtKB"/>
</dbReference>
<dbReference type="GO" id="GO:0016887">
    <property type="term" value="F:ATP hydrolysis activity"/>
    <property type="evidence" value="ECO:0000318"/>
    <property type="project" value="GO_Central"/>
</dbReference>
<dbReference type="GO" id="GO:0046961">
    <property type="term" value="F:proton-transporting ATPase activity, rotational mechanism"/>
    <property type="evidence" value="ECO:0000318"/>
    <property type="project" value="GO_Central"/>
</dbReference>
<dbReference type="GO" id="GO:0048388">
    <property type="term" value="P:endosomal lumen acidification"/>
    <property type="evidence" value="ECO:0000303"/>
    <property type="project" value="ComplexPortal"/>
</dbReference>
<dbReference type="GO" id="GO:0061795">
    <property type="term" value="P:Golgi lumen acidification"/>
    <property type="evidence" value="ECO:0000303"/>
    <property type="project" value="ComplexPortal"/>
</dbReference>
<dbReference type="GO" id="GO:1902600">
    <property type="term" value="P:proton transmembrane transport"/>
    <property type="evidence" value="ECO:0000314"/>
    <property type="project" value="ComplexPortal"/>
</dbReference>
<dbReference type="GO" id="GO:0007035">
    <property type="term" value="P:vacuolar acidification"/>
    <property type="evidence" value="ECO:0000304"/>
    <property type="project" value="SGD"/>
</dbReference>
<dbReference type="FunFam" id="1.20.5.620:FF:000004">
    <property type="entry name" value="V-type proton ATPase subunit G"/>
    <property type="match status" value="1"/>
</dbReference>
<dbReference type="FunFam" id="1.20.5.730:FF:000007">
    <property type="entry name" value="V-type proton ATPase subunit G"/>
    <property type="match status" value="1"/>
</dbReference>
<dbReference type="Gene3D" id="1.20.5.620">
    <property type="entry name" value="F1F0 ATP synthase subunit B, membrane domain"/>
    <property type="match status" value="1"/>
</dbReference>
<dbReference type="Gene3D" id="1.20.5.730">
    <property type="entry name" value="Single helix bin"/>
    <property type="match status" value="1"/>
</dbReference>
<dbReference type="InterPro" id="IPR005124">
    <property type="entry name" value="V-ATPase_G"/>
</dbReference>
<dbReference type="NCBIfam" id="TIGR01147">
    <property type="entry name" value="V_ATP_synt_G"/>
    <property type="match status" value="1"/>
</dbReference>
<dbReference type="PANTHER" id="PTHR12713:SF11">
    <property type="entry name" value="V-TYPE PROTON ATPASE SUBUNIT G"/>
    <property type="match status" value="1"/>
</dbReference>
<dbReference type="PANTHER" id="PTHR12713">
    <property type="entry name" value="VACUOLAR ATP SYNTHASE SUBUNIT G"/>
    <property type="match status" value="1"/>
</dbReference>
<dbReference type="Pfam" id="PF03179">
    <property type="entry name" value="V-ATPase_G"/>
    <property type="match status" value="1"/>
</dbReference>
<proteinExistence type="evidence at protein level"/>
<feature type="initiator methionine" description="Removed" evidence="12">
    <location>
        <position position="1"/>
    </location>
</feature>
<feature type="chain" id="PRO_0000192916" description="V-type proton ATPase subunit G">
    <location>
        <begin position="2"/>
        <end position="114"/>
    </location>
</feature>
<feature type="modified residue" description="N-acetylserine" evidence="12">
    <location>
        <position position="2"/>
    </location>
</feature>
<feature type="helix" evidence="14">
    <location>
        <begin position="4"/>
        <end position="60"/>
    </location>
</feature>
<feature type="strand" evidence="15">
    <location>
        <begin position="61"/>
        <end position="63"/>
    </location>
</feature>
<feature type="helix" evidence="13">
    <location>
        <begin position="70"/>
        <end position="73"/>
    </location>
</feature>
<feature type="strand" evidence="14">
    <location>
        <begin position="74"/>
        <end position="76"/>
    </location>
</feature>
<feature type="helix" evidence="14">
    <location>
        <begin position="77"/>
        <end position="89"/>
    </location>
</feature>
<feature type="helix" evidence="14">
    <location>
        <begin position="91"/>
        <end position="102"/>
    </location>
</feature>
<feature type="turn" evidence="16">
    <location>
        <begin position="111"/>
        <end position="113"/>
    </location>
</feature>
<comment type="function">
    <text evidence="4">Subunit of the V1 complex of vacuolar(H+)-ATPase (V-ATPase), a multisubunit enzyme composed of a peripheral complex (V1) that hydrolyzes ATP and a membrane integral complex (V0) that translocates protons (PubMed:7775427). V-ATPase is responsible for acidifying and maintaining the pH of intracellular compartments (PubMed:7775427).</text>
</comment>
<comment type="subunit">
    <text evidence="2 3 4">V-ATPase is a heteromultimeric enzyme composed of a peripheral catalytic V1 complex (components A to H) attached to an integral membrane V0 proton pore complex (components: a, c, c', c'', d, e, f and VOA1).</text>
</comment>
<comment type="interaction">
    <interactant intactId="EBI-20276">
        <id>P48836</id>
    </interactant>
    <interactant intactId="EBI-20268">
        <id>P22203</id>
        <label>VMA4</label>
    </interactant>
    <organismsDiffer>false</organismsDiffer>
    <experiments>5</experiments>
</comment>
<comment type="subcellular location">
    <subcellularLocation>
        <location evidence="4">Vacuole membrane</location>
        <topology evidence="6">Peripheral membrane protein</topology>
        <orientation evidence="6">Cytoplasmic side</orientation>
    </subcellularLocation>
</comment>
<comment type="miscellaneous">
    <text evidence="1">Present with 2280 molecules/cell in log phase SD medium.</text>
</comment>
<comment type="similarity">
    <text evidence="6">Belongs to the V-ATPase G subunit family.</text>
</comment>
<organism>
    <name type="scientific">Saccharomyces cerevisiae (strain ATCC 204508 / S288c)</name>
    <name type="common">Baker's yeast</name>
    <dbReference type="NCBI Taxonomy" id="559292"/>
    <lineage>
        <taxon>Eukaryota</taxon>
        <taxon>Fungi</taxon>
        <taxon>Dikarya</taxon>
        <taxon>Ascomycota</taxon>
        <taxon>Saccharomycotina</taxon>
        <taxon>Saccharomycetes</taxon>
        <taxon>Saccharomycetales</taxon>
        <taxon>Saccharomycetaceae</taxon>
        <taxon>Saccharomyces</taxon>
    </lineage>
</organism>